<comment type="function">
    <text>Sequence-specific transcription factor which is part of a developmental regulatory system that provides cells with specific positional identities on the anterior-posterior axis. Binds to the DNA sequence 5'-AA[AT]TTTTATTAC-3'.</text>
</comment>
<comment type="subunit">
    <text evidence="3">Interacts with SIRT2; the interaction is direct.</text>
</comment>
<comment type="interaction">
    <interactant intactId="EBI-2293516">
        <id>P31260</id>
    </interactant>
    <interactant intactId="EBI-286735">
        <id>O95373</id>
        <label>IPO7</label>
    </interactant>
    <organismsDiffer>false</organismsDiffer>
    <experiments>4</experiments>
</comment>
<comment type="interaction">
    <interactant intactId="EBI-2293516">
        <id>P31260</id>
    </interactant>
    <interactant intactId="EBI-2293548">
        <id>P17947</id>
        <label>SPI1</label>
    </interactant>
    <organismsDiffer>false</organismsDiffer>
    <experiments>2</experiments>
</comment>
<comment type="interaction">
    <interactant intactId="EBI-12896693">
        <id>P31260-2</id>
    </interactant>
    <interactant intactId="EBI-11427343">
        <id>Q9P2W3</id>
        <label>GNG13</label>
    </interactant>
    <organismsDiffer>false</organismsDiffer>
    <experiments>3</experiments>
</comment>
<comment type="subcellular location">
    <subcellularLocation>
        <location>Nucleus</location>
    </subcellularLocation>
</comment>
<comment type="alternative products">
    <event type="alternative splicing"/>
    <isoform>
        <id>P31260-1</id>
        <name>1</name>
        <name>PL1</name>
        <sequence type="displayed"/>
    </isoform>
    <isoform>
        <id>P31260-2</id>
        <name>2</name>
        <name>PL2</name>
        <sequence type="described" ref="VSP_002384 VSP_002385"/>
    </isoform>
</comment>
<comment type="similarity">
    <text evidence="6">Belongs to the Abd-B homeobox family.</text>
</comment>
<comment type="sequence caution" evidence="6">
    <conflict type="erroneous initiation">
        <sequence resource="EMBL-CDS" id="AAB96917"/>
    </conflict>
    <text>Truncated N-terminus.</text>
</comment>
<comment type="sequence caution" evidence="6">
    <conflict type="erroneous initiation">
        <sequence resource="EMBL-CDS" id="AAH13971"/>
    </conflict>
    <text>Truncated N-terminus.</text>
</comment>
<comment type="sequence caution" evidence="6">
    <conflict type="frameshift">
        <sequence resource="EMBL-CDS" id="CAB86198"/>
    </conflict>
</comment>
<name>HXA10_HUMAN</name>
<sequence length="410" mass="42414">MSARKGYLLPSPNYPTTMSCSESPAANSFLVDSLISSGRGEAGGGGGGAGGGGGGGYYAHGGVYLPPAADLPYGLQSCGLFPTLGGKRNEAASPGSGGGGGGLGPGAHGYGPSPIDLWLDAPRSCRMEPPDGPPPPPQQQPPPPPQPPQPAPQATSCSFAQNIKEESSYCLYDSADKCPKVSATAAELAPFPRGPPPDGCALGTSSGVPVPGYFRLSQAYGTAKGYGSGGGGAQQLGAGPFPAQPPGRGFDLPPALASGSADAARKERALDSPPPPTLACGSGGGSQGDEEAHASSSAAEELSPAPSESSKASPEKDSLGNSKGENAANWLTAKSGRKKRCPYTKHQTLELEKEFLFNMYLTRERRLEISRSVHLTDRQVKIWFQNRRMKLKKMNRENRIRELTANFNFS</sequence>
<organism>
    <name type="scientific">Homo sapiens</name>
    <name type="common">Human</name>
    <dbReference type="NCBI Taxonomy" id="9606"/>
    <lineage>
        <taxon>Eukaryota</taxon>
        <taxon>Metazoa</taxon>
        <taxon>Chordata</taxon>
        <taxon>Craniata</taxon>
        <taxon>Vertebrata</taxon>
        <taxon>Euteleostomi</taxon>
        <taxon>Mammalia</taxon>
        <taxon>Eutheria</taxon>
        <taxon>Euarchontoglires</taxon>
        <taxon>Primates</taxon>
        <taxon>Haplorrhini</taxon>
        <taxon>Catarrhini</taxon>
        <taxon>Hominidae</taxon>
        <taxon>Homo</taxon>
    </lineage>
</organism>
<dbReference type="EMBL" id="X58430">
    <property type="protein sequence ID" value="CAB86198.1"/>
    <property type="status" value="ALT_FRAME"/>
    <property type="molecule type" value="Genomic_DNA"/>
</dbReference>
<dbReference type="EMBL" id="AF040714">
    <property type="protein sequence ID" value="AAB96917.1"/>
    <property type="status" value="ALT_INIT"/>
    <property type="molecule type" value="Genomic_DNA"/>
</dbReference>
<dbReference type="EMBL" id="AK312450">
    <property type="protein sequence ID" value="BAG35357.1"/>
    <property type="molecule type" value="mRNA"/>
</dbReference>
<dbReference type="EMBL" id="AC004080">
    <property type="status" value="NOT_ANNOTATED_CDS"/>
    <property type="molecule type" value="Genomic_DNA"/>
</dbReference>
<dbReference type="EMBL" id="CH471073">
    <property type="protein sequence ID" value="EAW93885.1"/>
    <property type="molecule type" value="Genomic_DNA"/>
</dbReference>
<dbReference type="EMBL" id="BC013971">
    <property type="protein sequence ID" value="AAH13971.1"/>
    <property type="status" value="ALT_INIT"/>
    <property type="molecule type" value="mRNA"/>
</dbReference>
<dbReference type="EMBL" id="BC071843">
    <property type="protein sequence ID" value="AAH71843.1"/>
    <property type="molecule type" value="mRNA"/>
</dbReference>
<dbReference type="EMBL" id="BC094807">
    <property type="protein sequence ID" value="AAH94807.1"/>
    <property type="molecule type" value="mRNA"/>
</dbReference>
<dbReference type="EMBL" id="M30599">
    <property type="protein sequence ID" value="AAA36006.1"/>
    <property type="molecule type" value="mRNA"/>
</dbReference>
<dbReference type="EMBL" id="S69027">
    <property type="protein sequence ID" value="AAD14030.1"/>
    <property type="molecule type" value="mRNA"/>
</dbReference>
<dbReference type="EMBL" id="S69029">
    <property type="protein sequence ID" value="AAD14031.1"/>
    <property type="molecule type" value="mRNA"/>
</dbReference>
<dbReference type="CCDS" id="CCDS5410.2">
    <molecule id="P31260-1"/>
</dbReference>
<dbReference type="PIR" id="I65264">
    <property type="entry name" value="I65264"/>
</dbReference>
<dbReference type="PIR" id="I65265">
    <property type="entry name" value="I65265"/>
</dbReference>
<dbReference type="PIR" id="S26402">
    <property type="entry name" value="S26402"/>
</dbReference>
<dbReference type="PIR" id="S28814">
    <property type="entry name" value="S28814"/>
</dbReference>
<dbReference type="RefSeq" id="NP_061824.3">
    <molecule id="P31260-1"/>
    <property type="nucleotide sequence ID" value="NM_018951.3"/>
</dbReference>
<dbReference type="SMR" id="P31260"/>
<dbReference type="BioGRID" id="109446">
    <property type="interactions" value="44"/>
</dbReference>
<dbReference type="FunCoup" id="P31260">
    <property type="interactions" value="1473"/>
</dbReference>
<dbReference type="IntAct" id="P31260">
    <property type="interactions" value="22"/>
</dbReference>
<dbReference type="MINT" id="P31260"/>
<dbReference type="STRING" id="9606.ENSP00000283921"/>
<dbReference type="DrugBank" id="DB00136">
    <property type="generic name" value="Calcitriol"/>
</dbReference>
<dbReference type="GlyGen" id="P31260">
    <property type="glycosylation" value="1 site, 1 O-linked glycan (1 site)"/>
</dbReference>
<dbReference type="iPTMnet" id="P31260"/>
<dbReference type="PhosphoSitePlus" id="P31260"/>
<dbReference type="BioMuta" id="HOXA10"/>
<dbReference type="DMDM" id="294862509"/>
<dbReference type="jPOST" id="P31260"/>
<dbReference type="MassIVE" id="P31260"/>
<dbReference type="PaxDb" id="9606-ENSP00000283921"/>
<dbReference type="PeptideAtlas" id="P31260"/>
<dbReference type="ProteomicsDB" id="54766">
    <molecule id="P31260-1"/>
</dbReference>
<dbReference type="ProteomicsDB" id="54767">
    <molecule id="P31260-2"/>
</dbReference>
<dbReference type="Pumba" id="P31260"/>
<dbReference type="Antibodypedia" id="48441">
    <property type="antibodies" value="234 antibodies from 27 providers"/>
</dbReference>
<dbReference type="DNASU" id="3206"/>
<dbReference type="Ensembl" id="ENST00000283921.5">
    <molecule id="P31260-1"/>
    <property type="protein sequence ID" value="ENSP00000283921.4"/>
    <property type="gene ID" value="ENSG00000253293.6"/>
</dbReference>
<dbReference type="Ensembl" id="ENST00000396344.4">
    <molecule id="P31260-2"/>
    <property type="protein sequence ID" value="ENSP00000379633.4"/>
    <property type="gene ID" value="ENSG00000253293.6"/>
</dbReference>
<dbReference type="GeneID" id="3206"/>
<dbReference type="KEGG" id="hsa:3206"/>
<dbReference type="MANE-Select" id="ENST00000283921.5">
    <property type="protein sequence ID" value="ENSP00000283921.4"/>
    <property type="RefSeq nucleotide sequence ID" value="NM_018951.4"/>
    <property type="RefSeq protein sequence ID" value="NP_061824.3"/>
</dbReference>
<dbReference type="UCSC" id="uc011jzm.3">
    <molecule id="P31260-1"/>
    <property type="organism name" value="human"/>
</dbReference>
<dbReference type="AGR" id="HGNC:5100"/>
<dbReference type="CTD" id="3206"/>
<dbReference type="DisGeNET" id="3206"/>
<dbReference type="GeneCards" id="HOXA10"/>
<dbReference type="HGNC" id="HGNC:5100">
    <property type="gene designation" value="HOXA10"/>
</dbReference>
<dbReference type="HPA" id="ENSG00000253293">
    <property type="expression patterns" value="Tissue enhanced (endometrium, skeletal muscle, smooth muscle)"/>
</dbReference>
<dbReference type="MalaCards" id="HOXA10"/>
<dbReference type="MIM" id="142957">
    <property type="type" value="gene"/>
</dbReference>
<dbReference type="neXtProt" id="NX_P31260"/>
<dbReference type="OpenTargets" id="ENSG00000253293"/>
<dbReference type="PharmGKB" id="PA29377"/>
<dbReference type="VEuPathDB" id="HostDB:ENSG00000253293"/>
<dbReference type="eggNOG" id="KOG0487">
    <property type="taxonomic scope" value="Eukaryota"/>
</dbReference>
<dbReference type="GeneTree" id="ENSGT00940000162440"/>
<dbReference type="HOGENOM" id="CLU_057871_0_0_1"/>
<dbReference type="InParanoid" id="P31260"/>
<dbReference type="OMA" id="YPTAMSC"/>
<dbReference type="OrthoDB" id="6159439at2759"/>
<dbReference type="PAN-GO" id="P31260">
    <property type="GO annotations" value="4 GO annotations based on evolutionary models"/>
</dbReference>
<dbReference type="PhylomeDB" id="P31260"/>
<dbReference type="TreeFam" id="TF317819"/>
<dbReference type="PathwayCommons" id="P31260"/>
<dbReference type="SignaLink" id="P31260"/>
<dbReference type="SIGNOR" id="P31260"/>
<dbReference type="BioGRID-ORCS" id="3206">
    <property type="hits" value="20 hits in 1172 CRISPR screens"/>
</dbReference>
<dbReference type="GeneWiki" id="Homeobox_A10"/>
<dbReference type="GenomeRNAi" id="3206"/>
<dbReference type="Pharos" id="P31260">
    <property type="development level" value="Tbio"/>
</dbReference>
<dbReference type="PRO" id="PR:P31260"/>
<dbReference type="Proteomes" id="UP000005640">
    <property type="component" value="Chromosome 7"/>
</dbReference>
<dbReference type="RNAct" id="P31260">
    <property type="molecule type" value="protein"/>
</dbReference>
<dbReference type="Bgee" id="ENSG00000253293">
    <property type="expression patterns" value="Expressed in biceps brachii and 146 other cell types or tissues"/>
</dbReference>
<dbReference type="ExpressionAtlas" id="P31260">
    <property type="expression patterns" value="baseline and differential"/>
</dbReference>
<dbReference type="GO" id="GO:0000785">
    <property type="term" value="C:chromatin"/>
    <property type="evidence" value="ECO:0000247"/>
    <property type="project" value="NTNU_SB"/>
</dbReference>
<dbReference type="GO" id="GO:0005737">
    <property type="term" value="C:cytoplasm"/>
    <property type="evidence" value="ECO:0000314"/>
    <property type="project" value="UniProtKB"/>
</dbReference>
<dbReference type="GO" id="GO:0005654">
    <property type="term" value="C:nucleoplasm"/>
    <property type="evidence" value="ECO:0000314"/>
    <property type="project" value="HPA"/>
</dbReference>
<dbReference type="GO" id="GO:0005634">
    <property type="term" value="C:nucleus"/>
    <property type="evidence" value="ECO:0000314"/>
    <property type="project" value="UniProtKB"/>
</dbReference>
<dbReference type="GO" id="GO:0005667">
    <property type="term" value="C:transcription regulator complex"/>
    <property type="evidence" value="ECO:0007669"/>
    <property type="project" value="Ensembl"/>
</dbReference>
<dbReference type="GO" id="GO:0001228">
    <property type="term" value="F:DNA-binding transcription activator activity, RNA polymerase II-specific"/>
    <property type="evidence" value="ECO:0000314"/>
    <property type="project" value="NTNU_SB"/>
</dbReference>
<dbReference type="GO" id="GO:0000981">
    <property type="term" value="F:DNA-binding transcription factor activity, RNA polymerase II-specific"/>
    <property type="evidence" value="ECO:0000247"/>
    <property type="project" value="NTNU_SB"/>
</dbReference>
<dbReference type="GO" id="GO:0042826">
    <property type="term" value="F:histone deacetylase binding"/>
    <property type="evidence" value="ECO:0000353"/>
    <property type="project" value="UniProtKB"/>
</dbReference>
<dbReference type="GO" id="GO:0000978">
    <property type="term" value="F:RNA polymerase II cis-regulatory region sequence-specific DNA binding"/>
    <property type="evidence" value="ECO:0000314"/>
    <property type="project" value="NTNU_SB"/>
</dbReference>
<dbReference type="GO" id="GO:1990837">
    <property type="term" value="F:sequence-specific double-stranded DNA binding"/>
    <property type="evidence" value="ECO:0000314"/>
    <property type="project" value="ARUK-UCL"/>
</dbReference>
<dbReference type="GO" id="GO:0009952">
    <property type="term" value="P:anterior/posterior pattern specification"/>
    <property type="evidence" value="ECO:0007669"/>
    <property type="project" value="Ensembl"/>
</dbReference>
<dbReference type="GO" id="GO:0030326">
    <property type="term" value="P:embryonic limb morphogenesis"/>
    <property type="evidence" value="ECO:0007669"/>
    <property type="project" value="Ensembl"/>
</dbReference>
<dbReference type="GO" id="GO:0008584">
    <property type="term" value="P:male gonad development"/>
    <property type="evidence" value="ECO:0007669"/>
    <property type="project" value="Ensembl"/>
</dbReference>
<dbReference type="GO" id="GO:0045944">
    <property type="term" value="P:positive regulation of transcription by RNA polymerase II"/>
    <property type="evidence" value="ECO:0000314"/>
    <property type="project" value="NTNU_SB"/>
</dbReference>
<dbReference type="GO" id="GO:0030850">
    <property type="term" value="P:prostate gland development"/>
    <property type="evidence" value="ECO:0007669"/>
    <property type="project" value="Ensembl"/>
</dbReference>
<dbReference type="GO" id="GO:0009954">
    <property type="term" value="P:proximal/distal pattern formation"/>
    <property type="evidence" value="ECO:0007669"/>
    <property type="project" value="Ensembl"/>
</dbReference>
<dbReference type="GO" id="GO:0006357">
    <property type="term" value="P:regulation of transcription by RNA polymerase II"/>
    <property type="evidence" value="ECO:0000318"/>
    <property type="project" value="GO_Central"/>
</dbReference>
<dbReference type="GO" id="GO:0043627">
    <property type="term" value="P:response to estrogen"/>
    <property type="evidence" value="ECO:0007669"/>
    <property type="project" value="Ensembl"/>
</dbReference>
<dbReference type="GO" id="GO:0033574">
    <property type="term" value="P:response to testosterone"/>
    <property type="evidence" value="ECO:0007669"/>
    <property type="project" value="Ensembl"/>
</dbReference>
<dbReference type="GO" id="GO:0007338">
    <property type="term" value="P:single fertilization"/>
    <property type="evidence" value="ECO:0007669"/>
    <property type="project" value="Ensembl"/>
</dbReference>
<dbReference type="GO" id="GO:0001501">
    <property type="term" value="P:skeletal system development"/>
    <property type="evidence" value="ECO:0007669"/>
    <property type="project" value="Ensembl"/>
</dbReference>
<dbReference type="GO" id="GO:0007283">
    <property type="term" value="P:spermatogenesis"/>
    <property type="evidence" value="ECO:0000304"/>
    <property type="project" value="ProtInc"/>
</dbReference>
<dbReference type="GO" id="GO:0060065">
    <property type="term" value="P:uterus development"/>
    <property type="evidence" value="ECO:0007669"/>
    <property type="project" value="Ensembl"/>
</dbReference>
<dbReference type="CDD" id="cd00086">
    <property type="entry name" value="homeodomain"/>
    <property type="match status" value="1"/>
</dbReference>
<dbReference type="FunFam" id="1.10.10.60:FF:000018">
    <property type="entry name" value="Homeobox A10"/>
    <property type="match status" value="1"/>
</dbReference>
<dbReference type="Gene3D" id="1.10.10.60">
    <property type="entry name" value="Homeodomain-like"/>
    <property type="match status" value="1"/>
</dbReference>
<dbReference type="InterPro" id="IPR001356">
    <property type="entry name" value="HD"/>
</dbReference>
<dbReference type="InterPro" id="IPR020479">
    <property type="entry name" value="HD_metazoa"/>
</dbReference>
<dbReference type="InterPro" id="IPR017970">
    <property type="entry name" value="Homeobox_CS"/>
</dbReference>
<dbReference type="InterPro" id="IPR009057">
    <property type="entry name" value="Homeodomain-like_sf"/>
</dbReference>
<dbReference type="InterPro" id="IPR046333">
    <property type="entry name" value="HXA10/ABDB-like"/>
</dbReference>
<dbReference type="PANTHER" id="PTHR45874">
    <property type="entry name" value="HOMEOBOX PROTEIN ABDOMINAL-B"/>
    <property type="match status" value="1"/>
</dbReference>
<dbReference type="PANTHER" id="PTHR45874:SF1">
    <property type="entry name" value="HOMEOBOX PROTEIN HOX-A10"/>
    <property type="match status" value="1"/>
</dbReference>
<dbReference type="Pfam" id="PF00046">
    <property type="entry name" value="Homeodomain"/>
    <property type="match status" value="1"/>
</dbReference>
<dbReference type="PRINTS" id="PR00024">
    <property type="entry name" value="HOMEOBOX"/>
</dbReference>
<dbReference type="SMART" id="SM00389">
    <property type="entry name" value="HOX"/>
    <property type="match status" value="1"/>
</dbReference>
<dbReference type="SUPFAM" id="SSF46689">
    <property type="entry name" value="Homeodomain-like"/>
    <property type="match status" value="1"/>
</dbReference>
<dbReference type="PROSITE" id="PS00027">
    <property type="entry name" value="HOMEOBOX_1"/>
    <property type="match status" value="1"/>
</dbReference>
<dbReference type="PROSITE" id="PS50071">
    <property type="entry name" value="HOMEOBOX_2"/>
    <property type="match status" value="1"/>
</dbReference>
<accession>P31260</accession>
<accession>O43370</accession>
<accession>O43605</accession>
<accession>Q15949</accession>
<accession>Q504T1</accession>
<feature type="chain" id="PRO_0000200090" description="Homeobox protein Hox-A10">
    <location>
        <begin position="1"/>
        <end position="410"/>
    </location>
</feature>
<feature type="DNA-binding region" description="Homeobox" evidence="1">
    <location>
        <begin position="336"/>
        <end position="395"/>
    </location>
</feature>
<feature type="region of interest" description="Disordered" evidence="2">
    <location>
        <begin position="89"/>
        <end position="158"/>
    </location>
</feature>
<feature type="region of interest" description="Disordered" evidence="2">
    <location>
        <begin position="221"/>
        <end position="339"/>
    </location>
</feature>
<feature type="compositionally biased region" description="Gly residues" evidence="2">
    <location>
        <begin position="95"/>
        <end position="109"/>
    </location>
</feature>
<feature type="compositionally biased region" description="Pro residues" evidence="2">
    <location>
        <begin position="130"/>
        <end position="151"/>
    </location>
</feature>
<feature type="compositionally biased region" description="Gly residues" evidence="2">
    <location>
        <begin position="224"/>
        <end position="234"/>
    </location>
</feature>
<feature type="compositionally biased region" description="Low complexity" evidence="2">
    <location>
        <begin position="235"/>
        <end position="249"/>
    </location>
</feature>
<feature type="compositionally biased region" description="Low complexity" evidence="2">
    <location>
        <begin position="294"/>
        <end position="312"/>
    </location>
</feature>
<feature type="splice variant" id="VSP_002384" description="In isoform 2." evidence="4 5">
    <location>
        <begin position="1"/>
        <end position="316"/>
    </location>
</feature>
<feature type="splice variant" id="VSP_002385" description="In isoform 2." evidence="4 5">
    <original>DSL</original>
    <variation>MCQ</variation>
    <location>
        <begin position="317"/>
        <end position="319"/>
    </location>
</feature>
<feature type="sequence conflict" description="In Ref. 1; CAB86198." evidence="6" ref="1">
    <original>C</original>
    <variation>S</variation>
    <location>
        <position position="20"/>
    </location>
</feature>
<feature type="sequence conflict" description="In Ref. 1; CAB86198." evidence="6" ref="1">
    <original>L</original>
    <variation>W</variation>
    <location>
        <position position="75"/>
    </location>
</feature>
<feature type="sequence conflict" description="In Ref. 1; CAB86198." evidence="6" ref="1">
    <original>G</original>
    <variation>R</variation>
    <location>
        <position position="86"/>
    </location>
</feature>
<feature type="sequence conflict" description="In Ref. 1; CAB86198." evidence="6" ref="1">
    <original>QA</original>
    <variation>HR</variation>
    <location>
        <begin position="153"/>
        <end position="154"/>
    </location>
</feature>
<feature type="sequence conflict" description="In Ref. 1; CAB86198." evidence="6" ref="1">
    <original>P</original>
    <variation>R</variation>
    <location>
        <position position="192"/>
    </location>
</feature>
<feature type="sequence conflict" description="In Ref. 1; CAB86198." evidence="6" ref="1">
    <original>L</original>
    <variation>P</variation>
    <location>
        <position position="216"/>
    </location>
</feature>
<feature type="sequence conflict" description="In Ref. 1; CAB86198." evidence="6" ref="1">
    <original>G</original>
    <variation>A</variation>
    <location>
        <position position="221"/>
    </location>
</feature>
<feature type="sequence conflict" description="In Ref. 1; CAB86198." evidence="6" ref="1">
    <original>G</original>
    <variation>C</variation>
    <location>
        <position position="231"/>
    </location>
</feature>
<feature type="sequence conflict" description="In Ref. 1; CAB86198." evidence="6" ref="1">
    <original>QQ</original>
    <variation>HE</variation>
    <location>
        <begin position="234"/>
        <end position="235"/>
    </location>
</feature>
<feature type="sequence conflict" description="In Ref. 1; CAB86198." evidence="6" ref="1">
    <original>F</original>
    <variation>V</variation>
    <location>
        <position position="241"/>
    </location>
</feature>
<feature type="sequence conflict" description="In Ref. 1; CAB86198." evidence="6" ref="1">
    <original>R</original>
    <variation>G</variation>
    <location>
        <position position="248"/>
    </location>
</feature>
<feature type="sequence conflict" description="In Ref. 1; CAB86198." evidence="6" ref="1">
    <original>SA</original>
    <variation>GS</variation>
    <location>
        <begin position="260"/>
        <end position="261"/>
    </location>
</feature>
<feature type="sequence conflict" description="In Ref. 1; CAB86198." evidence="6" ref="1">
    <original>A</original>
    <variation>G</variation>
    <location>
        <position position="292"/>
    </location>
</feature>
<feature type="sequence conflict" description="In Ref. 1; CAB86198." evidence="6" ref="1">
    <original>S</original>
    <variation>R</variation>
    <location>
        <position position="295"/>
    </location>
</feature>
<feature type="sequence conflict" description="In Ref. 9; AAD14031." evidence="6" ref="9">
    <original>L</original>
    <variation>S</variation>
    <location>
        <position position="349"/>
    </location>
</feature>
<feature type="sequence conflict" description="In Ref. 9; AAD14031." evidence="6" ref="9">
    <original>L</original>
    <variation>F</variation>
    <location>
        <position position="351"/>
    </location>
</feature>
<feature type="sequence conflict" description="In Ref. 9; AAD14030." evidence="6" ref="9">
    <original>L</original>
    <variation>H</variation>
    <location>
        <position position="356"/>
    </location>
</feature>
<feature type="sequence conflict" description="In Ref. 9; AAD14030." evidence="6" ref="9">
    <original>M</original>
    <variation>R</variation>
    <location>
        <position position="359"/>
    </location>
</feature>
<feature type="sequence conflict" description="In Ref. 9; AAD14030." evidence="6" ref="9">
    <original>E</original>
    <variation>R</variation>
    <location>
        <position position="364"/>
    </location>
</feature>
<feature type="sequence conflict" description="In Ref. 9; AAD14030." evidence="6" ref="9">
    <original>L</original>
    <variation>I</variation>
    <location>
        <position position="367"/>
    </location>
</feature>
<feature type="sequence conflict" description="In Ref. 9; AAD14030." evidence="6" ref="9">
    <original>SRSVH</original>
    <variation>ANALC</variation>
    <location>
        <begin position="370"/>
        <end position="374"/>
    </location>
</feature>
<feature type="sequence conflict" description="In Ref. 9; AAD14030." evidence="6" ref="9">
    <original>D</original>
    <variation>E</variation>
    <location>
        <position position="377"/>
    </location>
</feature>
<feature type="sequence conflict" description="In Ref. 9; AAD14030." evidence="6" ref="9">
    <original>V</original>
    <variation>S</variation>
    <location>
        <position position="380"/>
    </location>
</feature>
<feature type="sequence conflict" description="In Ref. 9; AAD14030/AAD14031." evidence="6" ref="9">
    <original>R</original>
    <variation>P</variation>
    <location>
        <position position="387"/>
    </location>
</feature>
<reference key="1">
    <citation type="journal article" date="1991" name="Nucleic Acids Res.">
        <title>A human Hox 1 homeobox gene exhibits myeloid-specific expression of alternative transcripts in human hematopoietic cells.</title>
        <authorList>
            <person name="Lowney P."/>
            <person name="Corral J.C."/>
            <person name="Detmer K."/>
            <person name="Lebeau M.M."/>
            <person name="Deaven L."/>
            <person name="Lawrence H.J."/>
            <person name="Largman C."/>
        </authorList>
    </citation>
    <scope>NUCLEOTIDE SEQUENCE [GENOMIC DNA]</scope>
    <scope>ALTERNATIVE SPLICING</scope>
</reference>
<reference key="2">
    <citation type="submission" date="1997-12" db="EMBL/GenBank/DDBJ databases">
        <authorList>
            <person name="Mi X."/>
            <person name="Winters J.L."/>
            <person name="Stevens D.B."/>
            <person name="Fleischman R.A."/>
        </authorList>
    </citation>
    <scope>NUCLEOTIDE SEQUENCE [GENOMIC DNA]</scope>
</reference>
<reference key="3">
    <citation type="journal article" date="2004" name="Nat. Genet.">
        <title>Complete sequencing and characterization of 21,243 full-length human cDNAs.</title>
        <authorList>
            <person name="Ota T."/>
            <person name="Suzuki Y."/>
            <person name="Nishikawa T."/>
            <person name="Otsuki T."/>
            <person name="Sugiyama T."/>
            <person name="Irie R."/>
            <person name="Wakamatsu A."/>
            <person name="Hayashi K."/>
            <person name="Sato H."/>
            <person name="Nagai K."/>
            <person name="Kimura K."/>
            <person name="Makita H."/>
            <person name="Sekine M."/>
            <person name="Obayashi M."/>
            <person name="Nishi T."/>
            <person name="Shibahara T."/>
            <person name="Tanaka T."/>
            <person name="Ishii S."/>
            <person name="Yamamoto J."/>
            <person name="Saito K."/>
            <person name="Kawai Y."/>
            <person name="Isono Y."/>
            <person name="Nakamura Y."/>
            <person name="Nagahari K."/>
            <person name="Murakami K."/>
            <person name="Yasuda T."/>
            <person name="Iwayanagi T."/>
            <person name="Wagatsuma M."/>
            <person name="Shiratori A."/>
            <person name="Sudo H."/>
            <person name="Hosoiri T."/>
            <person name="Kaku Y."/>
            <person name="Kodaira H."/>
            <person name="Kondo H."/>
            <person name="Sugawara M."/>
            <person name="Takahashi M."/>
            <person name="Kanda K."/>
            <person name="Yokoi T."/>
            <person name="Furuya T."/>
            <person name="Kikkawa E."/>
            <person name="Omura Y."/>
            <person name="Abe K."/>
            <person name="Kamihara K."/>
            <person name="Katsuta N."/>
            <person name="Sato K."/>
            <person name="Tanikawa M."/>
            <person name="Yamazaki M."/>
            <person name="Ninomiya K."/>
            <person name="Ishibashi T."/>
            <person name="Yamashita H."/>
            <person name="Murakawa K."/>
            <person name="Fujimori K."/>
            <person name="Tanai H."/>
            <person name="Kimata M."/>
            <person name="Watanabe M."/>
            <person name="Hiraoka S."/>
            <person name="Chiba Y."/>
            <person name="Ishida S."/>
            <person name="Ono Y."/>
            <person name="Takiguchi S."/>
            <person name="Watanabe S."/>
            <person name="Yosida M."/>
            <person name="Hotuta T."/>
            <person name="Kusano J."/>
            <person name="Kanehori K."/>
            <person name="Takahashi-Fujii A."/>
            <person name="Hara H."/>
            <person name="Tanase T.-O."/>
            <person name="Nomura Y."/>
            <person name="Togiya S."/>
            <person name="Komai F."/>
            <person name="Hara R."/>
            <person name="Takeuchi K."/>
            <person name="Arita M."/>
            <person name="Imose N."/>
            <person name="Musashino K."/>
            <person name="Yuuki H."/>
            <person name="Oshima A."/>
            <person name="Sasaki N."/>
            <person name="Aotsuka S."/>
            <person name="Yoshikawa Y."/>
            <person name="Matsunawa H."/>
            <person name="Ichihara T."/>
            <person name="Shiohata N."/>
            <person name="Sano S."/>
            <person name="Moriya S."/>
            <person name="Momiyama H."/>
            <person name="Satoh N."/>
            <person name="Takami S."/>
            <person name="Terashima Y."/>
            <person name="Suzuki O."/>
            <person name="Nakagawa S."/>
            <person name="Senoh A."/>
            <person name="Mizoguchi H."/>
            <person name="Goto Y."/>
            <person name="Shimizu F."/>
            <person name="Wakebe H."/>
            <person name="Hishigaki H."/>
            <person name="Watanabe T."/>
            <person name="Sugiyama A."/>
            <person name="Takemoto M."/>
            <person name="Kawakami B."/>
            <person name="Yamazaki M."/>
            <person name="Watanabe K."/>
            <person name="Kumagai A."/>
            <person name="Itakura S."/>
            <person name="Fukuzumi Y."/>
            <person name="Fujimori Y."/>
            <person name="Komiyama M."/>
            <person name="Tashiro H."/>
            <person name="Tanigami A."/>
            <person name="Fujiwara T."/>
            <person name="Ono T."/>
            <person name="Yamada K."/>
            <person name="Fujii Y."/>
            <person name="Ozaki K."/>
            <person name="Hirao M."/>
            <person name="Ohmori Y."/>
            <person name="Kawabata A."/>
            <person name="Hikiji T."/>
            <person name="Kobatake N."/>
            <person name="Inagaki H."/>
            <person name="Ikema Y."/>
            <person name="Okamoto S."/>
            <person name="Okitani R."/>
            <person name="Kawakami T."/>
            <person name="Noguchi S."/>
            <person name="Itoh T."/>
            <person name="Shigeta K."/>
            <person name="Senba T."/>
            <person name="Matsumura K."/>
            <person name="Nakajima Y."/>
            <person name="Mizuno T."/>
            <person name="Morinaga M."/>
            <person name="Sasaki M."/>
            <person name="Togashi T."/>
            <person name="Oyama M."/>
            <person name="Hata H."/>
            <person name="Watanabe M."/>
            <person name="Komatsu T."/>
            <person name="Mizushima-Sugano J."/>
            <person name="Satoh T."/>
            <person name="Shirai Y."/>
            <person name="Takahashi Y."/>
            <person name="Nakagawa K."/>
            <person name="Okumura K."/>
            <person name="Nagase T."/>
            <person name="Nomura N."/>
            <person name="Kikuchi H."/>
            <person name="Masuho Y."/>
            <person name="Yamashita R."/>
            <person name="Nakai K."/>
            <person name="Yada T."/>
            <person name="Nakamura Y."/>
            <person name="Ohara O."/>
            <person name="Isogai T."/>
            <person name="Sugano S."/>
        </authorList>
    </citation>
    <scope>NUCLEOTIDE SEQUENCE [LARGE SCALE MRNA] (ISOFORM 2)</scope>
    <source>
        <tissue>Caudate nucleus</tissue>
    </source>
</reference>
<reference key="4">
    <citation type="journal article" date="2003" name="Nature">
        <title>The DNA sequence of human chromosome 7.</title>
        <authorList>
            <person name="Hillier L.W."/>
            <person name="Fulton R.S."/>
            <person name="Fulton L.A."/>
            <person name="Graves T.A."/>
            <person name="Pepin K.H."/>
            <person name="Wagner-McPherson C."/>
            <person name="Layman D."/>
            <person name="Maas J."/>
            <person name="Jaeger S."/>
            <person name="Walker R."/>
            <person name="Wylie K."/>
            <person name="Sekhon M."/>
            <person name="Becker M.C."/>
            <person name="O'Laughlin M.D."/>
            <person name="Schaller M.E."/>
            <person name="Fewell G.A."/>
            <person name="Delehaunty K.D."/>
            <person name="Miner T.L."/>
            <person name="Nash W.E."/>
            <person name="Cordes M."/>
            <person name="Du H."/>
            <person name="Sun H."/>
            <person name="Edwards J."/>
            <person name="Bradshaw-Cordum H."/>
            <person name="Ali J."/>
            <person name="Andrews S."/>
            <person name="Isak A."/>
            <person name="Vanbrunt A."/>
            <person name="Nguyen C."/>
            <person name="Du F."/>
            <person name="Lamar B."/>
            <person name="Courtney L."/>
            <person name="Kalicki J."/>
            <person name="Ozersky P."/>
            <person name="Bielicki L."/>
            <person name="Scott K."/>
            <person name="Holmes A."/>
            <person name="Harkins R."/>
            <person name="Harris A."/>
            <person name="Strong C.M."/>
            <person name="Hou S."/>
            <person name="Tomlinson C."/>
            <person name="Dauphin-Kohlberg S."/>
            <person name="Kozlowicz-Reilly A."/>
            <person name="Leonard S."/>
            <person name="Rohlfing T."/>
            <person name="Rock S.M."/>
            <person name="Tin-Wollam A.-M."/>
            <person name="Abbott A."/>
            <person name="Minx P."/>
            <person name="Maupin R."/>
            <person name="Strowmatt C."/>
            <person name="Latreille P."/>
            <person name="Miller N."/>
            <person name="Johnson D."/>
            <person name="Murray J."/>
            <person name="Woessner J.P."/>
            <person name="Wendl M.C."/>
            <person name="Yang S.-P."/>
            <person name="Schultz B.R."/>
            <person name="Wallis J.W."/>
            <person name="Spieth J."/>
            <person name="Bieri T.A."/>
            <person name="Nelson J.O."/>
            <person name="Berkowicz N."/>
            <person name="Wohldmann P.E."/>
            <person name="Cook L.L."/>
            <person name="Hickenbotham M.T."/>
            <person name="Eldred J."/>
            <person name="Williams D."/>
            <person name="Bedell J.A."/>
            <person name="Mardis E.R."/>
            <person name="Clifton S.W."/>
            <person name="Chissoe S.L."/>
            <person name="Marra M.A."/>
            <person name="Raymond C."/>
            <person name="Haugen E."/>
            <person name="Gillett W."/>
            <person name="Zhou Y."/>
            <person name="James R."/>
            <person name="Phelps K."/>
            <person name="Iadanoto S."/>
            <person name="Bubb K."/>
            <person name="Simms E."/>
            <person name="Levy R."/>
            <person name="Clendenning J."/>
            <person name="Kaul R."/>
            <person name="Kent W.J."/>
            <person name="Furey T.S."/>
            <person name="Baertsch R.A."/>
            <person name="Brent M.R."/>
            <person name="Keibler E."/>
            <person name="Flicek P."/>
            <person name="Bork P."/>
            <person name="Suyama M."/>
            <person name="Bailey J.A."/>
            <person name="Portnoy M.E."/>
            <person name="Torrents D."/>
            <person name="Chinwalla A.T."/>
            <person name="Gish W.R."/>
            <person name="Eddy S.R."/>
            <person name="McPherson J.D."/>
            <person name="Olson M.V."/>
            <person name="Eichler E.E."/>
            <person name="Green E.D."/>
            <person name="Waterston R.H."/>
            <person name="Wilson R.K."/>
        </authorList>
    </citation>
    <scope>NUCLEOTIDE SEQUENCE [LARGE SCALE GENOMIC DNA]</scope>
</reference>
<reference key="5">
    <citation type="submission" date="2005-07" db="EMBL/GenBank/DDBJ databases">
        <authorList>
            <person name="Mural R.J."/>
            <person name="Istrail S."/>
            <person name="Sutton G."/>
            <person name="Florea L."/>
            <person name="Halpern A.L."/>
            <person name="Mobarry C.M."/>
            <person name="Lippert R."/>
            <person name="Walenz B."/>
            <person name="Shatkay H."/>
            <person name="Dew I."/>
            <person name="Miller J.R."/>
            <person name="Flanigan M.J."/>
            <person name="Edwards N.J."/>
            <person name="Bolanos R."/>
            <person name="Fasulo D."/>
            <person name="Halldorsson B.V."/>
            <person name="Hannenhalli S."/>
            <person name="Turner R."/>
            <person name="Yooseph S."/>
            <person name="Lu F."/>
            <person name="Nusskern D.R."/>
            <person name="Shue B.C."/>
            <person name="Zheng X.H."/>
            <person name="Zhong F."/>
            <person name="Delcher A.L."/>
            <person name="Huson D.H."/>
            <person name="Kravitz S.A."/>
            <person name="Mouchard L."/>
            <person name="Reinert K."/>
            <person name="Remington K.A."/>
            <person name="Clark A.G."/>
            <person name="Waterman M.S."/>
            <person name="Eichler E.E."/>
            <person name="Adams M.D."/>
            <person name="Hunkapiller M.W."/>
            <person name="Myers E.W."/>
            <person name="Venter J.C."/>
        </authorList>
    </citation>
    <scope>NUCLEOTIDE SEQUENCE [LARGE SCALE GENOMIC DNA]</scope>
</reference>
<reference key="6">
    <citation type="journal article" date="2004" name="Genome Res.">
        <title>The status, quality, and expansion of the NIH full-length cDNA project: the Mammalian Gene Collection (MGC).</title>
        <authorList>
            <consortium name="The MGC Project Team"/>
        </authorList>
    </citation>
    <scope>NUCLEOTIDE SEQUENCE [LARGE SCALE MRNA] (ISOFORM 2)</scope>
    <scope>NUCLEOTIDE SEQUENCE [LARGE SCALE MRNA] OF 2-410 (ISOFORM 1)</scope>
    <source>
        <tissue>Muscle</tissue>
        <tissue>Salivary gland</tissue>
    </source>
</reference>
<reference key="7">
    <citation type="journal article" date="1989" name="Proc. Natl. Acad. Sci. U.S.A.">
        <title>Lineage-restricted expression of homeobox-containing genes in human hematopoietic cell lines.</title>
        <authorList>
            <person name="Shen W.-F."/>
            <person name="Largman C."/>
            <person name="Lowney P."/>
            <person name="Corral J.C."/>
            <person name="Detmer K."/>
            <person name="Hauser C.A."/>
            <person name="Simonitch T.A."/>
            <person name="Hack F.M."/>
            <person name="Lawrence H.J."/>
        </authorList>
    </citation>
    <scope>NUCLEOTIDE SEQUENCE [MRNA] OF 318-400</scope>
</reference>
<reference key="8">
    <citation type="journal article" date="1989" name="Nucleic Acids Res.">
        <title>The human HOX gene family.</title>
        <authorList>
            <person name="Acampora D."/>
            <person name="D'Esposito M."/>
            <person name="Faiella A."/>
            <person name="Pannese M."/>
            <person name="Migliaccio E."/>
            <person name="Morelli F."/>
            <person name="Stornaiuolo A."/>
            <person name="Nigro V."/>
            <person name="Simeone A."/>
            <person name="Boncinelli E."/>
        </authorList>
    </citation>
    <scope>NUCLEOTIDE SEQUENCE [GENOMIC DNA] OF 336-396</scope>
</reference>
<reference key="9">
    <citation type="journal article" date="1994" name="Biochem. Pharmacol.">
        <title>Homeobox genes: potential candidates for the transcriptional control of the transformed and invasive phenotype.</title>
        <authorList>
            <person name="Castronovo V."/>
            <person name="Kusaka M."/>
            <person name="Chariot A."/>
            <person name="Gielen J."/>
            <person name="Sobel M."/>
        </authorList>
    </citation>
    <scope>NUCLEOTIDE SEQUENCE [MRNA] OF 349-387</scope>
</reference>
<reference key="10">
    <citation type="journal article" date="2004" name="J. Biochem.">
        <title>Human histone deacetylase SIRT2 interacts with the homeobox transcription factor HOXA10.</title>
        <authorList>
            <person name="Bae N.S."/>
            <person name="Swanson M.J."/>
            <person name="Vassilev A."/>
            <person name="Howard B.H."/>
        </authorList>
    </citation>
    <scope>INTERACTION WITH SIRT2</scope>
</reference>
<protein>
    <recommendedName>
        <fullName>Homeobox protein Hox-A10</fullName>
    </recommendedName>
    <alternativeName>
        <fullName>Homeobox protein Hox-1.8</fullName>
    </alternativeName>
    <alternativeName>
        <fullName>Homeobox protein Hox-1H</fullName>
    </alternativeName>
    <alternativeName>
        <fullName>PL</fullName>
    </alternativeName>
</protein>
<evidence type="ECO:0000255" key="1">
    <source>
        <dbReference type="PROSITE-ProRule" id="PRU00108"/>
    </source>
</evidence>
<evidence type="ECO:0000256" key="2">
    <source>
        <dbReference type="SAM" id="MobiDB-lite"/>
    </source>
</evidence>
<evidence type="ECO:0000269" key="3">
    <source>
    </source>
</evidence>
<evidence type="ECO:0000303" key="4">
    <source>
    </source>
</evidence>
<evidence type="ECO:0000303" key="5">
    <source>
    </source>
</evidence>
<evidence type="ECO:0000305" key="6"/>
<gene>
    <name type="primary">HOXA10</name>
    <name type="synonym">HOX1H</name>
</gene>
<keyword id="KW-0025">Alternative splicing</keyword>
<keyword id="KW-0217">Developmental protein</keyword>
<keyword id="KW-0238">DNA-binding</keyword>
<keyword id="KW-0371">Homeobox</keyword>
<keyword id="KW-0539">Nucleus</keyword>
<keyword id="KW-1267">Proteomics identification</keyword>
<keyword id="KW-1185">Reference proteome</keyword>
<keyword id="KW-0804">Transcription</keyword>
<keyword id="KW-0805">Transcription regulation</keyword>
<proteinExistence type="evidence at protein level"/>